<comment type="function">
    <text evidence="3">The large envelope protein exists in two topological conformations, one which is termed 'external' or Le-HBsAg and the other 'internal' or Li-HBsAg. In its external conformation the protein attaches the virus to cell receptors and thereby initiating infection. This interaction determines the species specificity and liver tropism. This attachment induces virion internalization predominantly through caveolin-mediated endocytosis. The large envelope protein also assures fusion between virion membrane and endosomal membrane. In its internal conformation the protein plays a role in virion morphogenesis and mediates the contact with the nucleocapsid like a matrix protein.</text>
</comment>
<comment type="function">
    <text evidence="3">The middle envelope protein plays an important role in the budding of the virion. It is involved in the induction of budding in a nucleocapsid independent way. In this process the majority of envelope proteins bud to form subviral lipoprotein particles of 22 nm of diameter that do not contain a nucleocapsid.</text>
</comment>
<comment type="subunit">
    <molecule>Isoform L</molecule>
    <text evidence="2">In its internal form (Li-HBsAg), interacts with the capsid protein and with the isoform S. Interacts with host chaperone CANX.</text>
</comment>
<comment type="subunit">
    <molecule>Isoform M</molecule>
    <text evidence="2">Associates with host chaperone CANX through its pre-S2 N glycan; this association may be essential for isoform M proper secretion.</text>
</comment>
<comment type="subunit">
    <molecule>Isoform S</molecule>
    <text evidence="2">Interacts with isoform L. Interacts with the antigens of satellite virus HDV (HDVAgs); this interaction is required for encapsidation of HDV genomic RNA.</text>
</comment>
<comment type="subcellular location">
    <subcellularLocation>
        <location evidence="3">Virion membrane</location>
    </subcellularLocation>
</comment>
<comment type="alternative products">
    <event type="alternative splicing"/>
    <event type="alternative initiation"/>
    <isoform>
        <id>P03144-1</id>
        <name>L</name>
        <name>Large envelope protein</name>
        <name>LHB</name>
        <name>L-HBsAg</name>
        <sequence type="displayed"/>
    </isoform>
    <isoform>
        <id>P03144-2</id>
        <name>M</name>
        <name>Middle envelope protein</name>
        <name>MHB</name>
        <name>M-HBsAg</name>
        <sequence type="described" ref="VSP_031449"/>
    </isoform>
    <isoform>
        <id>P03144-3</id>
        <name>S</name>
        <name>Small envelope protein</name>
        <name>SHB</name>
        <name>S-HBsAg</name>
        <sequence type="described" ref="VSP_031448"/>
    </isoform>
</comment>
<comment type="domain">
    <text evidence="3">The large envelope protein is synthesized with the pre-S region at the cytosolic side of the endoplasmic reticulum and, hence will be within the virion after budding. Therefore the pre-S region is not N-glycosylated. Later a post-translational translocation of N-terminal pre-S and TM1 domains occur in about 50% of proteins at the virion surface. These molecules change their topology by an unknown mechanism, resulting in exposure of pre-S region at virion surface. For isoform M in contrast, the pre-S2 region is translocated cotranslationally to the endoplasmic reticulum lumen and is N-glycosylated.</text>
</comment>
<comment type="PTM">
    <text evidence="3">Isoform M is N-terminally acetylated by host at a ratio of 90%, and N-glycosylated by host at the pre-S2 region.</text>
</comment>
<comment type="PTM">
    <text evidence="3">Myristoylated.</text>
</comment>
<comment type="similarity">
    <text evidence="3">Belongs to the orthohepadnavirus major surface antigen family.</text>
</comment>
<comment type="sequence caution" evidence="5">
    <conflict type="erroneous initiation">
        <sequence resource="EMBL-CDS" id="AAA46757"/>
    </conflict>
</comment>
<evidence type="ECO:0000250" key="1">
    <source>
        <dbReference type="UniProtKB" id="P03138"/>
    </source>
</evidence>
<evidence type="ECO:0000250" key="2">
    <source>
        <dbReference type="UniProtKB" id="P03141"/>
    </source>
</evidence>
<evidence type="ECO:0000255" key="3">
    <source>
        <dbReference type="HAMAP-Rule" id="MF_04075"/>
    </source>
</evidence>
<evidence type="ECO:0000256" key="4">
    <source>
        <dbReference type="SAM" id="MobiDB-lite"/>
    </source>
</evidence>
<evidence type="ECO:0000305" key="5"/>
<reference key="1">
    <citation type="journal article" date="1984" name="J. Virol.">
        <title>Nucleotide sequence of an infectious molecularly cloned genome of ground squirrel hepatitis virus.</title>
        <authorList>
            <person name="Seeger C."/>
            <person name="Ganem D."/>
            <person name="Varmus H.E."/>
        </authorList>
    </citation>
    <scope>NUCLEOTIDE SEQUENCE [GENOMIC DNA]</scope>
</reference>
<reference key="2">
    <citation type="journal article" date="1996" name="Intervirology">
        <title>Functions of the large hepatitis B virus surface protein in viral particle morphogenesis.</title>
        <authorList>
            <person name="Bruss V."/>
            <person name="Gerhardt E."/>
            <person name="Vieluf K."/>
            <person name="Wunderlich G."/>
        </authorList>
    </citation>
    <scope>REVIEW</scope>
</reference>
<reference key="3">
    <citation type="journal article" date="1998" name="Adv. Exp. Med. Biol.">
        <title>Role of glycan processing in hepatitis B virus envelope protein trafficking.</title>
        <authorList>
            <person name="Block T.M."/>
            <person name="Lu X."/>
            <person name="Mehta A."/>
            <person name="Park J."/>
            <person name="Blumberg B.S."/>
            <person name="Dwek R."/>
        </authorList>
    </citation>
    <scope>REVIEW</scope>
</reference>
<reference key="4">
    <citation type="journal article" date="2004" name="Virus Res.">
        <title>Envelopment of the hepatitis B virus nucleocapsid.</title>
        <authorList>
            <person name="Bruss V."/>
        </authorList>
    </citation>
    <scope>REVIEW</scope>
</reference>
<reference key="5">
    <citation type="journal article" date="2006" name="Cancer Sci.">
        <title>Hepatitis B virus pre-S mutants, endoplasmic reticulum stress and hepatocarcinogenesis.</title>
        <authorList>
            <person name="Wang H.C."/>
            <person name="Huang W."/>
            <person name="Lai M.D."/>
            <person name="Su I.J."/>
        </authorList>
    </citation>
    <scope>REVIEW</scope>
</reference>
<keyword id="KW-0007">Acetylation</keyword>
<keyword id="KW-0024">Alternative initiation</keyword>
<keyword id="KW-0025">Alternative splicing</keyword>
<keyword id="KW-1166">Caveolin-mediated endocytosis of virus by host</keyword>
<keyword id="KW-1170">Fusion of virus membrane with host endosomal membrane</keyword>
<keyword id="KW-1168">Fusion of virus membrane with host membrane</keyword>
<keyword id="KW-0325">Glycoprotein</keyword>
<keyword id="KW-0945">Host-virus interaction</keyword>
<keyword id="KW-0449">Lipoprotein</keyword>
<keyword id="KW-0472">Membrane</keyword>
<keyword id="KW-0519">Myristate</keyword>
<keyword id="KW-0812">Transmembrane</keyword>
<keyword id="KW-1133">Transmembrane helix</keyword>
<keyword id="KW-1161">Viral attachment to host cell</keyword>
<keyword id="KW-1162">Viral penetration into host cytoplasm</keyword>
<keyword id="KW-0946">Virion</keyword>
<keyword id="KW-1164">Virus endocytosis by host</keyword>
<keyword id="KW-1160">Virus entry into host cell</keyword>
<organism>
    <name type="scientific">Ground squirrel hepatitis virus (strain 27)</name>
    <name type="common">GSHV</name>
    <dbReference type="NCBI Taxonomy" id="10406"/>
    <lineage>
        <taxon>Viruses</taxon>
        <taxon>Riboviria</taxon>
        <taxon>Pararnavirae</taxon>
        <taxon>Artverviricota</taxon>
        <taxon>Revtraviricetes</taxon>
        <taxon>Blubervirales</taxon>
        <taxon>Hepadnaviridae</taxon>
        <taxon>Orthohepadnavirus</taxon>
    </lineage>
</organism>
<feature type="initiator methionine" description="Removed; by host" evidence="3">
    <location>
        <position position="1"/>
    </location>
</feature>
<feature type="chain" id="PRO_0000038083" description="Large envelope protein" evidence="3">
    <location>
        <begin position="2"/>
        <end position="428"/>
    </location>
</feature>
<feature type="topological domain" description="Intravirion; in internal conformation" evidence="3">
    <location>
        <begin position="2"/>
        <end position="283"/>
    </location>
</feature>
<feature type="topological domain" description="Virion surface; in external conformation" evidence="3">
    <location>
        <begin position="2"/>
        <end position="211"/>
    </location>
</feature>
<feature type="transmembrane region" description="Helical; Name=TM1; Note=In external conformation" evidence="3">
    <location>
        <begin position="212"/>
        <end position="232"/>
    </location>
</feature>
<feature type="topological domain" description="Intravirion; in external conformation" evidence="3">
    <location>
        <begin position="233"/>
        <end position="283"/>
    </location>
</feature>
<feature type="transmembrane region" description="Helical; Name=TM2" evidence="3">
    <location>
        <begin position="284"/>
        <end position="304"/>
    </location>
</feature>
<feature type="topological domain" description="Virion surface" evidence="3">
    <location>
        <begin position="305"/>
        <end position="376"/>
    </location>
</feature>
<feature type="transmembrane region" description="Helical" evidence="3">
    <location>
        <begin position="377"/>
        <end position="397"/>
    </location>
</feature>
<feature type="topological domain" description="Intravirion" evidence="3">
    <location>
        <begin position="398"/>
        <end position="403"/>
    </location>
</feature>
<feature type="transmembrane region" description="Helical; Name=TM3" evidence="3">
    <location>
        <begin position="404"/>
        <end position="426"/>
    </location>
</feature>
<feature type="topological domain" description="Virion surface" evidence="3">
    <location>
        <begin position="427"/>
        <end position="428"/>
    </location>
</feature>
<feature type="region of interest" description="Pre-S" evidence="3">
    <location>
        <begin position="2"/>
        <end position="204"/>
    </location>
</feature>
<feature type="region of interest" description="Pre-S1" evidence="3">
    <location>
        <begin position="2"/>
        <end position="145"/>
    </location>
</feature>
<feature type="region of interest" description="Disordered" evidence="4">
    <location>
        <begin position="110"/>
        <end position="144"/>
    </location>
</feature>
<feature type="region of interest" description="Pre-S2" evidence="3">
    <location>
        <begin position="146"/>
        <end position="204"/>
    </location>
</feature>
<feature type="lipid moiety-binding region" description="N-myristoyl glycine; by host" evidence="3">
    <location>
        <position position="2"/>
    </location>
</feature>
<feature type="glycosylation site" description="N-linked (GlcNAc...) asparagine; by host" evidence="3">
    <location>
        <position position="348"/>
    </location>
</feature>
<feature type="splice variant" id="VSP_031448" description="In isoform S." evidence="5">
    <location>
        <begin position="1"/>
        <end position="206"/>
    </location>
</feature>
<feature type="splice variant" id="VSP_031449" description="In isoform M." evidence="5">
    <location>
        <begin position="1"/>
        <end position="146"/>
    </location>
</feature>
<feature type="glycosylation site" description="N-linked (GlcNAc...) asparagine" evidence="1">
    <location sequence="P03144-2">
        <position position="3"/>
    </location>
</feature>
<gene>
    <name evidence="3" type="primary">S</name>
</gene>
<proteinExistence type="inferred from homology"/>
<dbReference type="EMBL" id="K02715">
    <property type="protein sequence ID" value="AAA46757.1"/>
    <property type="status" value="ALT_INIT"/>
    <property type="molecule type" value="Genomic_DNA"/>
</dbReference>
<dbReference type="PIR" id="A03709">
    <property type="entry name" value="SAVLS"/>
</dbReference>
<dbReference type="RefSeq" id="NP_040995.1">
    <molecule id="P03144-2"/>
    <property type="nucleotide sequence ID" value="NC_001484.1"/>
</dbReference>
<dbReference type="RefSeq" id="NP_955537.1">
    <molecule id="P03144-3"/>
    <property type="nucleotide sequence ID" value="NP_040995.1"/>
</dbReference>
<dbReference type="SMR" id="P03144"/>
<dbReference type="GlyCosmos" id="P03144">
    <property type="glycosylation" value="2 sites, No reported glycans"/>
</dbReference>
<dbReference type="KEGG" id="vg:1488458"/>
<dbReference type="OrthoDB" id="12461at10239"/>
<dbReference type="Proteomes" id="UP000009156">
    <property type="component" value="Genome"/>
</dbReference>
<dbReference type="GO" id="GO:0016020">
    <property type="term" value="C:membrane"/>
    <property type="evidence" value="ECO:0007669"/>
    <property type="project" value="UniProtKB-UniRule"/>
</dbReference>
<dbReference type="GO" id="GO:0055036">
    <property type="term" value="C:virion membrane"/>
    <property type="evidence" value="ECO:0007669"/>
    <property type="project" value="UniProtKB-SubCell"/>
</dbReference>
<dbReference type="GO" id="GO:0075513">
    <property type="term" value="P:caveolin-mediated endocytosis of virus by host cell"/>
    <property type="evidence" value="ECO:0007669"/>
    <property type="project" value="UniProtKB-KW"/>
</dbReference>
<dbReference type="GO" id="GO:0039654">
    <property type="term" value="P:fusion of virus membrane with host endosome membrane"/>
    <property type="evidence" value="ECO:0007669"/>
    <property type="project" value="UniProtKB-KW"/>
</dbReference>
<dbReference type="GO" id="GO:0019062">
    <property type="term" value="P:virion attachment to host cell"/>
    <property type="evidence" value="ECO:0007669"/>
    <property type="project" value="UniProtKB-UniRule"/>
</dbReference>
<dbReference type="HAMAP" id="MF_04075">
    <property type="entry name" value="HBV_HBSAG"/>
    <property type="match status" value="1"/>
</dbReference>
<dbReference type="InterPro" id="IPR000349">
    <property type="entry name" value="HBV_HBSAG"/>
</dbReference>
<dbReference type="Pfam" id="PF00695">
    <property type="entry name" value="vMSA"/>
    <property type="match status" value="1"/>
</dbReference>
<protein>
    <recommendedName>
        <fullName evidence="3">Large envelope protein</fullName>
    </recommendedName>
    <alternativeName>
        <fullName evidence="3">L glycoprotein</fullName>
    </alternativeName>
    <alternativeName>
        <fullName evidence="3">L-HBsAg</fullName>
        <shortName evidence="3">LHB</shortName>
    </alternativeName>
    <alternativeName>
        <fullName evidence="3">Large S protein</fullName>
    </alternativeName>
    <alternativeName>
        <fullName evidence="3">Large surface protein</fullName>
    </alternativeName>
    <alternativeName>
        <fullName evidence="3">Major surface antigen</fullName>
    </alternativeName>
</protein>
<accession>P03144</accession>
<organismHost>
    <name type="scientific">Otospermophilus beecheyi</name>
    <name type="common">California ground squirrel</name>
    <name type="synonym">Spermophilus beecheyi</name>
    <dbReference type="NCBI Taxonomy" id="34862"/>
</organismHost>
<sequence length="428" mass="48383">MGNNIKVTFDPNKLAAWWPTVGTYYTPTTTVTNPAIFKPGIYQTTSLKNPKNQQELDAILMTRYKEIDWDNWQGFPVNQRLPVSNNNPPSGQRAETFEIKSRPIIVPGIRDIPRGIVPPQTPSNRDQRRKPTPLTPPLRDTHPHLTMKNQTGHLQGFAEGLRALTTSDHHNSAYGDPFTTLSPVVPTVSTTLSPPLTIGDPVLSTEMSPSGLLGLLAGLQVVYFLWTKILTIAQSLDWWWTSLSFPGGIPECTGQNLQFQTCKHLPTSCPPTCNGFRWMYLRRFIIYLLVLLLFLTFLLVLLDWKGLLPVCPMMPATETTVNCRQCTISAQDTFTTPYCCCLKPTAGNCTCWPIPSSWALGSYLWEWALARFSWLSLLVPLLQWLGGISLTVWLLLIWMIWFWGPVLMSILPPFIPIFALFFLIWAYI</sequence>
<name>HBSAG_GSHV</name>